<keyword id="KW-0963">Cytoplasm</keyword>
<keyword id="KW-0342">GTP-binding</keyword>
<keyword id="KW-0436">Ligase</keyword>
<keyword id="KW-0460">Magnesium</keyword>
<keyword id="KW-0479">Metal-binding</keyword>
<keyword id="KW-0547">Nucleotide-binding</keyword>
<keyword id="KW-0658">Purine biosynthesis</keyword>
<sequence length="431" mass="46406">MGKNVVVLGTQWGDEGKGKIVDLLTDKAKYVVRYQGGHNAGHTLVIDGEKTVLHLIPSGVLRDNVKCLIGNGVVLCPKALMTEITMLEAKGVPVRERLLISDACPLILPYHNALDVAREVARGNKAIGTTGRGIGPAYEDKVARRGLRVGDLFCAETFAAKLKEIVEYHNFSLVNYYKVEPVNYEEVLADALAVADTIKKMTADISEILDQARIAGESIMFEGAQGTLLDIDHGTYPYVTSSNTTAGGVATGCGVGPRHLDYILGITKAYTTRVGSGPFPTELDDEVGNHLGTVGHEFGATTGRERRCGWFDAVAMHRAIQVNSVTGFCLTKLDVLDGLETLKICTGYKTEAGDIITVPPTAAEGYDKITPVYEEMPGWTESTVGATSVDVLPENALAYIKRIEEITGIPVDIISTGPDRVETIIKVNPFL</sequence>
<evidence type="ECO:0000255" key="1">
    <source>
        <dbReference type="HAMAP-Rule" id="MF_00011"/>
    </source>
</evidence>
<reference key="1">
    <citation type="journal article" date="2005" name="Proc. Natl. Acad. Sci. U.S.A.">
        <title>The psychrophilic lifestyle as revealed by the genome sequence of Colwellia psychrerythraea 34H through genomic and proteomic analyses.</title>
        <authorList>
            <person name="Methe B.A."/>
            <person name="Nelson K.E."/>
            <person name="Deming J.W."/>
            <person name="Momen B."/>
            <person name="Melamud E."/>
            <person name="Zhang X."/>
            <person name="Moult J."/>
            <person name="Madupu R."/>
            <person name="Nelson W.C."/>
            <person name="Dodson R.J."/>
            <person name="Brinkac L.M."/>
            <person name="Daugherty S.C."/>
            <person name="Durkin A.S."/>
            <person name="DeBoy R.T."/>
            <person name="Kolonay J.F."/>
            <person name="Sullivan S.A."/>
            <person name="Zhou L."/>
            <person name="Davidsen T.M."/>
            <person name="Wu M."/>
            <person name="Huston A.L."/>
            <person name="Lewis M."/>
            <person name="Weaver B."/>
            <person name="Weidman J.F."/>
            <person name="Khouri H."/>
            <person name="Utterback T.R."/>
            <person name="Feldblyum T.V."/>
            <person name="Fraser C.M."/>
        </authorList>
    </citation>
    <scope>NUCLEOTIDE SEQUENCE [LARGE SCALE GENOMIC DNA]</scope>
    <source>
        <strain>34H / ATCC BAA-681</strain>
    </source>
</reference>
<name>PURA_COLP3</name>
<feature type="chain" id="PRO_0000224268" description="Adenylosuccinate synthetase">
    <location>
        <begin position="1"/>
        <end position="431"/>
    </location>
</feature>
<feature type="active site" description="Proton acceptor" evidence="1">
    <location>
        <position position="14"/>
    </location>
</feature>
<feature type="active site" description="Proton donor" evidence="1">
    <location>
        <position position="42"/>
    </location>
</feature>
<feature type="binding site" evidence="1">
    <location>
        <begin position="13"/>
        <end position="19"/>
    </location>
    <ligand>
        <name>GTP</name>
        <dbReference type="ChEBI" id="CHEBI:37565"/>
    </ligand>
</feature>
<feature type="binding site" description="in other chain" evidence="1">
    <location>
        <begin position="14"/>
        <end position="17"/>
    </location>
    <ligand>
        <name>IMP</name>
        <dbReference type="ChEBI" id="CHEBI:58053"/>
        <note>ligand shared between dimeric partners</note>
    </ligand>
</feature>
<feature type="binding site" evidence="1">
    <location>
        <position position="14"/>
    </location>
    <ligand>
        <name>Mg(2+)</name>
        <dbReference type="ChEBI" id="CHEBI:18420"/>
    </ligand>
</feature>
<feature type="binding site" description="in other chain" evidence="1">
    <location>
        <begin position="39"/>
        <end position="42"/>
    </location>
    <ligand>
        <name>IMP</name>
        <dbReference type="ChEBI" id="CHEBI:58053"/>
        <note>ligand shared between dimeric partners</note>
    </ligand>
</feature>
<feature type="binding site" evidence="1">
    <location>
        <begin position="41"/>
        <end position="43"/>
    </location>
    <ligand>
        <name>GTP</name>
        <dbReference type="ChEBI" id="CHEBI:37565"/>
    </ligand>
</feature>
<feature type="binding site" evidence="1">
    <location>
        <position position="41"/>
    </location>
    <ligand>
        <name>Mg(2+)</name>
        <dbReference type="ChEBI" id="CHEBI:18420"/>
    </ligand>
</feature>
<feature type="binding site" description="in other chain" evidence="1">
    <location>
        <position position="130"/>
    </location>
    <ligand>
        <name>IMP</name>
        <dbReference type="ChEBI" id="CHEBI:58053"/>
        <note>ligand shared between dimeric partners</note>
    </ligand>
</feature>
<feature type="binding site" evidence="1">
    <location>
        <position position="144"/>
    </location>
    <ligand>
        <name>IMP</name>
        <dbReference type="ChEBI" id="CHEBI:58053"/>
        <note>ligand shared between dimeric partners</note>
    </ligand>
</feature>
<feature type="binding site" description="in other chain" evidence="1">
    <location>
        <position position="225"/>
    </location>
    <ligand>
        <name>IMP</name>
        <dbReference type="ChEBI" id="CHEBI:58053"/>
        <note>ligand shared between dimeric partners</note>
    </ligand>
</feature>
<feature type="binding site" description="in other chain" evidence="1">
    <location>
        <position position="240"/>
    </location>
    <ligand>
        <name>IMP</name>
        <dbReference type="ChEBI" id="CHEBI:58053"/>
        <note>ligand shared between dimeric partners</note>
    </ligand>
</feature>
<feature type="binding site" evidence="1">
    <location>
        <begin position="300"/>
        <end position="306"/>
    </location>
    <ligand>
        <name>substrate</name>
    </ligand>
</feature>
<feature type="binding site" description="in other chain" evidence="1">
    <location>
        <position position="304"/>
    </location>
    <ligand>
        <name>IMP</name>
        <dbReference type="ChEBI" id="CHEBI:58053"/>
        <note>ligand shared between dimeric partners</note>
    </ligand>
</feature>
<feature type="binding site" evidence="1">
    <location>
        <position position="306"/>
    </location>
    <ligand>
        <name>GTP</name>
        <dbReference type="ChEBI" id="CHEBI:37565"/>
    </ligand>
</feature>
<feature type="binding site" evidence="1">
    <location>
        <begin position="332"/>
        <end position="334"/>
    </location>
    <ligand>
        <name>GTP</name>
        <dbReference type="ChEBI" id="CHEBI:37565"/>
    </ligand>
</feature>
<feature type="binding site" evidence="1">
    <location>
        <begin position="415"/>
        <end position="417"/>
    </location>
    <ligand>
        <name>GTP</name>
        <dbReference type="ChEBI" id="CHEBI:37565"/>
    </ligand>
</feature>
<accession>Q48A17</accession>
<proteinExistence type="inferred from homology"/>
<organism>
    <name type="scientific">Colwellia psychrerythraea (strain 34H / ATCC BAA-681)</name>
    <name type="common">Vibrio psychroerythus</name>
    <dbReference type="NCBI Taxonomy" id="167879"/>
    <lineage>
        <taxon>Bacteria</taxon>
        <taxon>Pseudomonadati</taxon>
        <taxon>Pseudomonadota</taxon>
        <taxon>Gammaproteobacteria</taxon>
        <taxon>Alteromonadales</taxon>
        <taxon>Colwelliaceae</taxon>
        <taxon>Colwellia</taxon>
    </lineage>
</organism>
<gene>
    <name evidence="1" type="primary">purA</name>
    <name type="ordered locus">CPS_0330</name>
</gene>
<dbReference type="EC" id="6.3.4.4" evidence="1"/>
<dbReference type="EMBL" id="CP000083">
    <property type="protein sequence ID" value="AAZ25616.1"/>
    <property type="molecule type" value="Genomic_DNA"/>
</dbReference>
<dbReference type="RefSeq" id="WP_011041203.1">
    <property type="nucleotide sequence ID" value="NC_003910.7"/>
</dbReference>
<dbReference type="SMR" id="Q48A17"/>
<dbReference type="STRING" id="167879.CPS_0330"/>
<dbReference type="KEGG" id="cps:CPS_0330"/>
<dbReference type="eggNOG" id="COG0104">
    <property type="taxonomic scope" value="Bacteria"/>
</dbReference>
<dbReference type="HOGENOM" id="CLU_029848_0_0_6"/>
<dbReference type="UniPathway" id="UPA00075">
    <property type="reaction ID" value="UER00335"/>
</dbReference>
<dbReference type="Proteomes" id="UP000000547">
    <property type="component" value="Chromosome"/>
</dbReference>
<dbReference type="GO" id="GO:0005737">
    <property type="term" value="C:cytoplasm"/>
    <property type="evidence" value="ECO:0007669"/>
    <property type="project" value="UniProtKB-SubCell"/>
</dbReference>
<dbReference type="GO" id="GO:0004019">
    <property type="term" value="F:adenylosuccinate synthase activity"/>
    <property type="evidence" value="ECO:0007669"/>
    <property type="project" value="UniProtKB-UniRule"/>
</dbReference>
<dbReference type="GO" id="GO:0005525">
    <property type="term" value="F:GTP binding"/>
    <property type="evidence" value="ECO:0007669"/>
    <property type="project" value="UniProtKB-UniRule"/>
</dbReference>
<dbReference type="GO" id="GO:0000287">
    <property type="term" value="F:magnesium ion binding"/>
    <property type="evidence" value="ECO:0007669"/>
    <property type="project" value="UniProtKB-UniRule"/>
</dbReference>
<dbReference type="GO" id="GO:0044208">
    <property type="term" value="P:'de novo' AMP biosynthetic process"/>
    <property type="evidence" value="ECO:0007669"/>
    <property type="project" value="UniProtKB-UniRule"/>
</dbReference>
<dbReference type="GO" id="GO:0046040">
    <property type="term" value="P:IMP metabolic process"/>
    <property type="evidence" value="ECO:0007669"/>
    <property type="project" value="TreeGrafter"/>
</dbReference>
<dbReference type="CDD" id="cd03108">
    <property type="entry name" value="AdSS"/>
    <property type="match status" value="1"/>
</dbReference>
<dbReference type="FunFam" id="1.10.300.10:FF:000001">
    <property type="entry name" value="Adenylosuccinate synthetase"/>
    <property type="match status" value="1"/>
</dbReference>
<dbReference type="FunFam" id="3.90.170.10:FF:000001">
    <property type="entry name" value="Adenylosuccinate synthetase"/>
    <property type="match status" value="1"/>
</dbReference>
<dbReference type="Gene3D" id="3.40.440.10">
    <property type="entry name" value="Adenylosuccinate Synthetase, subunit A, domain 1"/>
    <property type="match status" value="1"/>
</dbReference>
<dbReference type="Gene3D" id="1.10.300.10">
    <property type="entry name" value="Adenylosuccinate Synthetase, subunit A, domain 2"/>
    <property type="match status" value="1"/>
</dbReference>
<dbReference type="Gene3D" id="3.90.170.10">
    <property type="entry name" value="Adenylosuccinate Synthetase, subunit A, domain 3"/>
    <property type="match status" value="1"/>
</dbReference>
<dbReference type="HAMAP" id="MF_00011">
    <property type="entry name" value="Adenylosucc_synth"/>
    <property type="match status" value="1"/>
</dbReference>
<dbReference type="InterPro" id="IPR018220">
    <property type="entry name" value="Adenylosuccin_syn_GTP-bd"/>
</dbReference>
<dbReference type="InterPro" id="IPR033128">
    <property type="entry name" value="Adenylosuccin_syn_Lys_AS"/>
</dbReference>
<dbReference type="InterPro" id="IPR042109">
    <property type="entry name" value="Adenylosuccinate_synth_dom1"/>
</dbReference>
<dbReference type="InterPro" id="IPR042110">
    <property type="entry name" value="Adenylosuccinate_synth_dom2"/>
</dbReference>
<dbReference type="InterPro" id="IPR042111">
    <property type="entry name" value="Adenylosuccinate_synth_dom3"/>
</dbReference>
<dbReference type="InterPro" id="IPR001114">
    <property type="entry name" value="Adenylosuccinate_synthetase"/>
</dbReference>
<dbReference type="InterPro" id="IPR027417">
    <property type="entry name" value="P-loop_NTPase"/>
</dbReference>
<dbReference type="NCBIfam" id="NF002223">
    <property type="entry name" value="PRK01117.1"/>
    <property type="match status" value="1"/>
</dbReference>
<dbReference type="NCBIfam" id="TIGR00184">
    <property type="entry name" value="purA"/>
    <property type="match status" value="1"/>
</dbReference>
<dbReference type="PANTHER" id="PTHR11846">
    <property type="entry name" value="ADENYLOSUCCINATE SYNTHETASE"/>
    <property type="match status" value="1"/>
</dbReference>
<dbReference type="PANTHER" id="PTHR11846:SF0">
    <property type="entry name" value="ADENYLOSUCCINATE SYNTHETASE"/>
    <property type="match status" value="1"/>
</dbReference>
<dbReference type="Pfam" id="PF00709">
    <property type="entry name" value="Adenylsucc_synt"/>
    <property type="match status" value="1"/>
</dbReference>
<dbReference type="SMART" id="SM00788">
    <property type="entry name" value="Adenylsucc_synt"/>
    <property type="match status" value="1"/>
</dbReference>
<dbReference type="SUPFAM" id="SSF52540">
    <property type="entry name" value="P-loop containing nucleoside triphosphate hydrolases"/>
    <property type="match status" value="1"/>
</dbReference>
<dbReference type="PROSITE" id="PS01266">
    <property type="entry name" value="ADENYLOSUCCIN_SYN_1"/>
    <property type="match status" value="1"/>
</dbReference>
<dbReference type="PROSITE" id="PS00513">
    <property type="entry name" value="ADENYLOSUCCIN_SYN_2"/>
    <property type="match status" value="1"/>
</dbReference>
<protein>
    <recommendedName>
        <fullName evidence="1">Adenylosuccinate synthetase</fullName>
        <shortName evidence="1">AMPSase</shortName>
        <shortName evidence="1">AdSS</shortName>
        <ecNumber evidence="1">6.3.4.4</ecNumber>
    </recommendedName>
    <alternativeName>
        <fullName evidence="1">IMP--aspartate ligase</fullName>
    </alternativeName>
</protein>
<comment type="function">
    <text evidence="1">Plays an important role in the de novo pathway of purine nucleotide biosynthesis. Catalyzes the first committed step in the biosynthesis of AMP from IMP.</text>
</comment>
<comment type="catalytic activity">
    <reaction evidence="1">
        <text>IMP + L-aspartate + GTP = N(6)-(1,2-dicarboxyethyl)-AMP + GDP + phosphate + 2 H(+)</text>
        <dbReference type="Rhea" id="RHEA:15753"/>
        <dbReference type="ChEBI" id="CHEBI:15378"/>
        <dbReference type="ChEBI" id="CHEBI:29991"/>
        <dbReference type="ChEBI" id="CHEBI:37565"/>
        <dbReference type="ChEBI" id="CHEBI:43474"/>
        <dbReference type="ChEBI" id="CHEBI:57567"/>
        <dbReference type="ChEBI" id="CHEBI:58053"/>
        <dbReference type="ChEBI" id="CHEBI:58189"/>
        <dbReference type="EC" id="6.3.4.4"/>
    </reaction>
</comment>
<comment type="cofactor">
    <cofactor evidence="1">
        <name>Mg(2+)</name>
        <dbReference type="ChEBI" id="CHEBI:18420"/>
    </cofactor>
    <text evidence="1">Binds 1 Mg(2+) ion per subunit.</text>
</comment>
<comment type="pathway">
    <text evidence="1">Purine metabolism; AMP biosynthesis via de novo pathway; AMP from IMP: step 1/2.</text>
</comment>
<comment type="subunit">
    <text evidence="1">Homodimer.</text>
</comment>
<comment type="subcellular location">
    <subcellularLocation>
        <location evidence="1">Cytoplasm</location>
    </subcellularLocation>
</comment>
<comment type="similarity">
    <text evidence="1">Belongs to the adenylosuccinate synthetase family.</text>
</comment>